<evidence type="ECO:0000255" key="1">
    <source>
        <dbReference type="HAMAP-Rule" id="MF_03000"/>
    </source>
</evidence>
<evidence type="ECO:0000255" key="2">
    <source>
        <dbReference type="PROSITE-ProRule" id="PRU01185"/>
    </source>
</evidence>
<evidence type="ECO:0000256" key="3">
    <source>
        <dbReference type="SAM" id="MobiDB-lite"/>
    </source>
</evidence>
<gene>
    <name type="primary">eif3A</name>
    <name type="synonym">eif3s10</name>
    <name type="ORF">DDB_G0272078</name>
</gene>
<accession>Q86B20</accession>
<accession>Q55A61</accession>
<comment type="function">
    <text evidence="1">RNA-binding component of the eukaryotic translation initiation factor 3 (eIF-3) complex, which is involved in protein synthesis of a specialized repertoire of mRNAs and, together with other initiation factors, stimulates binding of mRNA and methionyl-tRNAi to the 40S ribosome. The eIF-3 complex specifically targets and initiates translation of a subset of mRNAs involved in cell proliferation.</text>
</comment>
<comment type="subunit">
    <text evidence="1">Component of the eukaryotic translation initiation factor 3 (eIF-3) complex.</text>
</comment>
<comment type="subcellular location">
    <subcellularLocation>
        <location evidence="1">Cytoplasm</location>
    </subcellularLocation>
</comment>
<comment type="similarity">
    <text evidence="1">Belongs to the eIF-3 subunit A family.</text>
</comment>
<sequence>MSTQQALAQANEHALSQANDLIKVGSKLRALSVLRDLLSDRSQWHSSLEQIMSLYVSLCAEQLDYQSLRDGIHHFKVSIMSQKEFSIVPLENIFKEIITPIEQKVDELKEKIEKENQENPLVEQNEISLIDPQQTLLFSYMKYLFEAYKAMIEVLTRQNTKFEHTKFDHSKFDSTLLKISTQALNYCSKYQRKPDFMVLTELFRSSIEQLFKVPSLDTVNTHIEIRFHQLTVAISLGLYLIAYKSIEDINIMLFSLLVKPKPVVLATYYQKLAQVYWITNAHLLHAYALYKHYVYNKNYNMNFTQADSQLYSSVLLVAALSSPIQEVNQNQSLLQFDSQSQRAMGLASLLSLQSIPKRETFLVDVRKVTNEVYPELADLASIFEKKTSPLMFAKLLEPKIKFIEGHAQLSQYLKPFLRVVFTKIALQVSKVYEVIKIEEFIKLVPFYTKTQIELYLLESIKRKLIGARIDHKNGVIRFGHYDFDSAKISDQLSNLATGVGKALNMIEPEKKQQQHDKLKKEVYVKIINSLQDEHRRILARKEIIEKKKIYMEQQDRIKKQKEHEELQKKIQEKVARDQQRLKEDMERREKEQAEEESQQNQLDQTINAIDKAKVEMKAKIAKIAKQLYILERAYREEELPVVESLQKTKAVEDKQYFESTQAEFLKLHREVHDRNVTEKARLNRIVPEYQKFTQAVIEERKKQLPALQKEQEKRFQEFLIQQEQDVQERKAKREKARIAAAQEKARKEEQERERLEQEHLEQERLEEERKNAPYVPPSSRRTFRDDDDEREESGRWGGRRGGDDFGRSKADEGDRWGRREDAPPPRRDEGGDRWGRREDAPPPRRDEGGDRWGKREDAPPPRRDEGGWGRRDDAPPPRRDEGGDRWGRRDDAPPRRDDAPPPRRDDAPPPRRDEGGDRWGRRDDAPPRRDGGGSGGFGGRRDDAPPRRDEGGDRWGRREDAPPPRRDEGGDRWGRRDDAPPRRDGGGGSGFGRNQGAQGDQNDSWRSDNKKEENKKDADGWQTVGAKKRY</sequence>
<keyword id="KW-0175">Coiled coil</keyword>
<keyword id="KW-0963">Cytoplasm</keyword>
<keyword id="KW-0903">Direct protein sequencing</keyword>
<keyword id="KW-0396">Initiation factor</keyword>
<keyword id="KW-0648">Protein biosynthesis</keyword>
<keyword id="KW-1185">Reference proteome</keyword>
<keyword id="KW-0694">RNA-binding</keyword>
<organism>
    <name type="scientific">Dictyostelium discoideum</name>
    <name type="common">Social amoeba</name>
    <dbReference type="NCBI Taxonomy" id="44689"/>
    <lineage>
        <taxon>Eukaryota</taxon>
        <taxon>Amoebozoa</taxon>
        <taxon>Evosea</taxon>
        <taxon>Eumycetozoa</taxon>
        <taxon>Dictyostelia</taxon>
        <taxon>Dictyosteliales</taxon>
        <taxon>Dictyosteliaceae</taxon>
        <taxon>Dictyostelium</taxon>
    </lineage>
</organism>
<protein>
    <recommendedName>
        <fullName evidence="1">Eukaryotic translation initiation factor 3 subunit A</fullName>
        <shortName evidence="1">eIF3a</shortName>
    </recommendedName>
    <alternativeName>
        <fullName evidence="1">Eukaryotic translation initiation factor 3 subunit 10</fullName>
    </alternativeName>
</protein>
<name>EIF3A_DICDI</name>
<proteinExistence type="evidence at protein level"/>
<dbReference type="EMBL" id="AAFI02000007">
    <property type="protein sequence ID" value="EAL71400.1"/>
    <property type="molecule type" value="Genomic_DNA"/>
</dbReference>
<dbReference type="RefSeq" id="XP_645332.1">
    <property type="nucleotide sequence ID" value="XM_640240.1"/>
</dbReference>
<dbReference type="SMR" id="Q86B20"/>
<dbReference type="FunCoup" id="Q86B20">
    <property type="interactions" value="1069"/>
</dbReference>
<dbReference type="STRING" id="44689.Q86B20"/>
<dbReference type="PaxDb" id="44689-DDB0233930"/>
<dbReference type="EnsemblProtists" id="EAL71400">
    <property type="protein sequence ID" value="EAL71400"/>
    <property type="gene ID" value="DDB_G0272078"/>
</dbReference>
<dbReference type="GeneID" id="8618294"/>
<dbReference type="KEGG" id="ddi:DDB_G0272078"/>
<dbReference type="dictyBase" id="DDB_G0272078">
    <property type="gene designation" value="eif3A"/>
</dbReference>
<dbReference type="VEuPathDB" id="AmoebaDB:DDB_G0272078"/>
<dbReference type="eggNOG" id="KOG2072">
    <property type="taxonomic scope" value="Eukaryota"/>
</dbReference>
<dbReference type="HOGENOM" id="CLU_294480_0_0_1"/>
<dbReference type="InParanoid" id="Q86B20"/>
<dbReference type="OMA" id="EHITNKR"/>
<dbReference type="PhylomeDB" id="Q86B20"/>
<dbReference type="Reactome" id="R-DDI-156827">
    <property type="pathway name" value="L13a-mediated translational silencing of Ceruloplasmin expression"/>
</dbReference>
<dbReference type="Reactome" id="R-DDI-72689">
    <property type="pathway name" value="Formation of a pool of free 40S subunits"/>
</dbReference>
<dbReference type="Reactome" id="R-DDI-72695">
    <property type="pathway name" value="Formation of the ternary complex, and subsequently, the 43S complex"/>
</dbReference>
<dbReference type="Reactome" id="R-DDI-72702">
    <property type="pathway name" value="Ribosomal scanning and start codon recognition"/>
</dbReference>
<dbReference type="PRO" id="PR:Q86B20"/>
<dbReference type="Proteomes" id="UP000002195">
    <property type="component" value="Chromosome 2"/>
</dbReference>
<dbReference type="GO" id="GO:0016282">
    <property type="term" value="C:eukaryotic 43S preinitiation complex"/>
    <property type="evidence" value="ECO:0007669"/>
    <property type="project" value="UniProtKB-UniRule"/>
</dbReference>
<dbReference type="GO" id="GO:0033290">
    <property type="term" value="C:eukaryotic 48S preinitiation complex"/>
    <property type="evidence" value="ECO:0007669"/>
    <property type="project" value="UniProtKB-UniRule"/>
</dbReference>
<dbReference type="GO" id="GO:0005852">
    <property type="term" value="C:eukaryotic translation initiation factor 3 complex"/>
    <property type="evidence" value="ECO:0000250"/>
    <property type="project" value="dictyBase"/>
</dbReference>
<dbReference type="GO" id="GO:0071540">
    <property type="term" value="C:eukaryotic translation initiation factor 3 complex, eIF3e"/>
    <property type="evidence" value="ECO:0000318"/>
    <property type="project" value="GO_Central"/>
</dbReference>
<dbReference type="GO" id="GO:0071541">
    <property type="term" value="C:eukaryotic translation initiation factor 3 complex, eIF3m"/>
    <property type="evidence" value="ECO:0000318"/>
    <property type="project" value="GO_Central"/>
</dbReference>
<dbReference type="GO" id="GO:0043614">
    <property type="term" value="C:multi-eIF complex"/>
    <property type="evidence" value="ECO:0000318"/>
    <property type="project" value="GO_Central"/>
</dbReference>
<dbReference type="GO" id="GO:0003729">
    <property type="term" value="F:mRNA binding"/>
    <property type="evidence" value="ECO:0000318"/>
    <property type="project" value="GO_Central"/>
</dbReference>
<dbReference type="GO" id="GO:0003743">
    <property type="term" value="F:translation initiation factor activity"/>
    <property type="evidence" value="ECO:0007669"/>
    <property type="project" value="UniProtKB-UniRule"/>
</dbReference>
<dbReference type="GO" id="GO:0001732">
    <property type="term" value="P:formation of cytoplasmic translation initiation complex"/>
    <property type="evidence" value="ECO:0000318"/>
    <property type="project" value="GO_Central"/>
</dbReference>
<dbReference type="GO" id="GO:0002188">
    <property type="term" value="P:translation reinitiation"/>
    <property type="evidence" value="ECO:0000318"/>
    <property type="project" value="GO_Central"/>
</dbReference>
<dbReference type="Gene3D" id="1.25.40.860">
    <property type="match status" value="2"/>
</dbReference>
<dbReference type="Gene3D" id="4.10.860.10">
    <property type="entry name" value="UVR domain"/>
    <property type="match status" value="1"/>
</dbReference>
<dbReference type="HAMAP" id="MF_03000">
    <property type="entry name" value="eIF3a"/>
    <property type="match status" value="1"/>
</dbReference>
<dbReference type="InterPro" id="IPR027512">
    <property type="entry name" value="EIF3A"/>
</dbReference>
<dbReference type="InterPro" id="IPR054711">
    <property type="entry name" value="eIF3a_PCI_TPR-like"/>
</dbReference>
<dbReference type="InterPro" id="IPR000717">
    <property type="entry name" value="PCI_dom"/>
</dbReference>
<dbReference type="PANTHER" id="PTHR14005:SF0">
    <property type="entry name" value="EUKARYOTIC TRANSLATION INITIATION FACTOR 3 SUBUNIT A"/>
    <property type="match status" value="1"/>
</dbReference>
<dbReference type="PANTHER" id="PTHR14005">
    <property type="entry name" value="EUKARYOTIC TRANSLATION INITIATION FACTOR 3, THETA SUBUNIT"/>
    <property type="match status" value="1"/>
</dbReference>
<dbReference type="Pfam" id="PF22591">
    <property type="entry name" value="eIF3a_PCI_TPR-like"/>
    <property type="match status" value="1"/>
</dbReference>
<dbReference type="Pfam" id="PF01399">
    <property type="entry name" value="PCI"/>
    <property type="match status" value="1"/>
</dbReference>
<dbReference type="SMART" id="SM00088">
    <property type="entry name" value="PINT"/>
    <property type="match status" value="1"/>
</dbReference>
<dbReference type="PROSITE" id="PS50250">
    <property type="entry name" value="PCI"/>
    <property type="match status" value="1"/>
</dbReference>
<feature type="chain" id="PRO_0000330329" description="Eukaryotic translation initiation factor 3 subunit A">
    <location>
        <begin position="1"/>
        <end position="1030"/>
    </location>
</feature>
<feature type="domain" description="PCI" evidence="2">
    <location>
        <begin position="308"/>
        <end position="483"/>
    </location>
</feature>
<feature type="region of interest" description="Disordered" evidence="3">
    <location>
        <begin position="576"/>
        <end position="603"/>
    </location>
</feature>
<feature type="region of interest" description="Disordered" evidence="3">
    <location>
        <begin position="737"/>
        <end position="1030"/>
    </location>
</feature>
<feature type="coiled-coil region" evidence="1">
    <location>
        <begin position="94"/>
        <end position="126"/>
    </location>
</feature>
<feature type="coiled-coil region" evidence="1">
    <location>
        <begin position="527"/>
        <end position="620"/>
    </location>
</feature>
<feature type="coiled-coil region" evidence="1">
    <location>
        <begin position="720"/>
        <end position="772"/>
    </location>
</feature>
<feature type="compositionally biased region" description="Basic and acidic residues" evidence="3">
    <location>
        <begin position="576"/>
        <end position="591"/>
    </location>
</feature>
<feature type="compositionally biased region" description="Basic and acidic residues" evidence="3">
    <location>
        <begin position="743"/>
        <end position="771"/>
    </location>
</feature>
<feature type="compositionally biased region" description="Basic and acidic residues" evidence="3">
    <location>
        <begin position="800"/>
        <end position="931"/>
    </location>
</feature>
<feature type="compositionally biased region" description="Basic and acidic residues" evidence="3">
    <location>
        <begin position="939"/>
        <end position="985"/>
    </location>
</feature>
<feature type="compositionally biased region" description="Basic and acidic residues" evidence="3">
    <location>
        <begin position="1003"/>
        <end position="1019"/>
    </location>
</feature>
<reference key="1">
    <citation type="journal article" date="2002" name="Nature">
        <title>Sequence and analysis of chromosome 2 of Dictyostelium discoideum.</title>
        <authorList>
            <person name="Gloeckner G."/>
            <person name="Eichinger L."/>
            <person name="Szafranski K."/>
            <person name="Pachebat J.A."/>
            <person name="Bankier A.T."/>
            <person name="Dear P.H."/>
            <person name="Lehmann R."/>
            <person name="Baumgart C."/>
            <person name="Parra G."/>
            <person name="Abril J.F."/>
            <person name="Guigo R."/>
            <person name="Kumpf K."/>
            <person name="Tunggal B."/>
            <person name="Cox E.C."/>
            <person name="Quail M.A."/>
            <person name="Platzer M."/>
            <person name="Rosenthal A."/>
            <person name="Noegel A.A."/>
        </authorList>
    </citation>
    <scope>NUCLEOTIDE SEQUENCE [LARGE SCALE GENOMIC DNA]</scope>
    <source>
        <strain>AX4</strain>
    </source>
</reference>
<reference key="2">
    <citation type="journal article" date="2005" name="Nature">
        <title>The genome of the social amoeba Dictyostelium discoideum.</title>
        <authorList>
            <person name="Eichinger L."/>
            <person name="Pachebat J.A."/>
            <person name="Gloeckner G."/>
            <person name="Rajandream M.A."/>
            <person name="Sucgang R."/>
            <person name="Berriman M."/>
            <person name="Song J."/>
            <person name="Olsen R."/>
            <person name="Szafranski K."/>
            <person name="Xu Q."/>
            <person name="Tunggal B."/>
            <person name="Kummerfeld S."/>
            <person name="Madera M."/>
            <person name="Konfortov B.A."/>
            <person name="Rivero F."/>
            <person name="Bankier A.T."/>
            <person name="Lehmann R."/>
            <person name="Hamlin N."/>
            <person name="Davies R."/>
            <person name="Gaudet P."/>
            <person name="Fey P."/>
            <person name="Pilcher K."/>
            <person name="Chen G."/>
            <person name="Saunders D."/>
            <person name="Sodergren E.J."/>
            <person name="Davis P."/>
            <person name="Kerhornou A."/>
            <person name="Nie X."/>
            <person name="Hall N."/>
            <person name="Anjard C."/>
            <person name="Hemphill L."/>
            <person name="Bason N."/>
            <person name="Farbrother P."/>
            <person name="Desany B."/>
            <person name="Just E."/>
            <person name="Morio T."/>
            <person name="Rost R."/>
            <person name="Churcher C.M."/>
            <person name="Cooper J."/>
            <person name="Haydock S."/>
            <person name="van Driessche N."/>
            <person name="Cronin A."/>
            <person name="Goodhead I."/>
            <person name="Muzny D.M."/>
            <person name="Mourier T."/>
            <person name="Pain A."/>
            <person name="Lu M."/>
            <person name="Harper D."/>
            <person name="Lindsay R."/>
            <person name="Hauser H."/>
            <person name="James K.D."/>
            <person name="Quiles M."/>
            <person name="Madan Babu M."/>
            <person name="Saito T."/>
            <person name="Buchrieser C."/>
            <person name="Wardroper A."/>
            <person name="Felder M."/>
            <person name="Thangavelu M."/>
            <person name="Johnson D."/>
            <person name="Knights A."/>
            <person name="Loulseged H."/>
            <person name="Mungall K.L."/>
            <person name="Oliver K."/>
            <person name="Price C."/>
            <person name="Quail M.A."/>
            <person name="Urushihara H."/>
            <person name="Hernandez J."/>
            <person name="Rabbinowitsch E."/>
            <person name="Steffen D."/>
            <person name="Sanders M."/>
            <person name="Ma J."/>
            <person name="Kohara Y."/>
            <person name="Sharp S."/>
            <person name="Simmonds M.N."/>
            <person name="Spiegler S."/>
            <person name="Tivey A."/>
            <person name="Sugano S."/>
            <person name="White B."/>
            <person name="Walker D."/>
            <person name="Woodward J.R."/>
            <person name="Winckler T."/>
            <person name="Tanaka Y."/>
            <person name="Shaulsky G."/>
            <person name="Schleicher M."/>
            <person name="Weinstock G.M."/>
            <person name="Rosenthal A."/>
            <person name="Cox E.C."/>
            <person name="Chisholm R.L."/>
            <person name="Gibbs R.A."/>
            <person name="Loomis W.F."/>
            <person name="Platzer M."/>
            <person name="Kay R.R."/>
            <person name="Williams J.G."/>
            <person name="Dear P.H."/>
            <person name="Noegel A.A."/>
            <person name="Barrell B.G."/>
            <person name="Kuspa A."/>
        </authorList>
    </citation>
    <scope>NUCLEOTIDE SEQUENCE [LARGE SCALE GENOMIC DNA]</scope>
    <source>
        <strain>AX4</strain>
    </source>
</reference>
<reference key="3">
    <citation type="submission" date="2009-07" db="UniProtKB">
        <authorList>
            <person name="Bienvenut W.V."/>
            <person name="Ura S."/>
            <person name="Insall R.H."/>
        </authorList>
    </citation>
    <scope>PROTEIN SEQUENCE OF 488-501 AND 626-632</scope>
    <scope>IDENTIFICATION BY MASS SPECTROMETRY</scope>
    <source>
        <strain>AX2</strain>
    </source>
</reference>